<reference key="1">
    <citation type="journal article" date="1997" name="J. Gen. Virol.">
        <title>The Lassa fever virus L gene: nucleotide sequence, comparison, and precipitation of a predicted 250 kDa protein with monospecific antiserum.</title>
        <authorList>
            <person name="Lukashevich I.S."/>
            <person name="Djavani M."/>
            <person name="Shapiro K."/>
            <person name="Sanchez A."/>
            <person name="Ravkov E."/>
            <person name="Nichol S.T."/>
            <person name="Salvato M.S."/>
        </authorList>
    </citation>
    <scope>NUCLEOTIDE SEQUENCE [GENOMIC RNA]</scope>
</reference>
<reference key="2">
    <citation type="journal article" date="1997" name="Virology">
        <title>Completion of the Lassa fever virus sequence and identification of a RING finger open reading frame at the L RNA 5' End.</title>
        <authorList>
            <person name="Djavani M."/>
            <person name="Lukashevich I.S."/>
            <person name="Sanchez A."/>
            <person name="Nichol S.T."/>
            <person name="Salvato M.S."/>
        </authorList>
    </citation>
    <scope>NUCLEOTIDE SEQUENCE [GENOMIC RNA]</scope>
</reference>
<reference key="3">
    <citation type="journal article" date="2017" name="Crit. Rev. Microbiol.">
        <title>Bunyaviridae RdRps: structure, motifs, and RNA synthesis machinery.</title>
        <authorList>
            <person name="Amroun A."/>
            <person name="Priet S."/>
            <person name="de Lamballerie X."/>
            <person name="Querat G."/>
        </authorList>
    </citation>
    <scope>REVIEW</scope>
</reference>
<reference key="4">
    <citation type="journal article" date="2020" name="Trends Microbiol.">
        <title>The Cap-Snatching Mechanism of Bunyaviruses.</title>
        <authorList>
            <person name="Olschewski S."/>
            <person name="Cusack S."/>
            <person name="Rosenthal M."/>
        </authorList>
    </citation>
    <scope>REVIEW</scope>
</reference>
<accession>O09705</accession>
<sequence length="2218" mass="253432">MEEDIACVKDLVSKYLVDNERLSRQKLAFLVQTEPRMLLMEGLKLLSLCIEVDSCNANGCEHNSEDKSVERILHDHGILTPSLCLWYPDGYKLTGNVLILLECFVRSSPANFEQKYIEDFKKLEQLKEDLKSVDINLIPLIDGRTSFYNEQIPDWVNDKLRDTLFSLLKYAQESNSLFEESEYSRLCESLFMTSGRLSGVESLNVLMDNRSNHYEEVIASCHQGINNKLTAHEVKLQIEEEYQVFRNRLRKGEIEGQFLKVDKSQLLNELNNLYADKVVAEDNIEHLIYQFKRASPILRFLYANVDEGNEKRGNQTIGECQVQCWRSFLNKVKSLRILNTRRKLLLIFDALILLASKHDLMKQKCLKGWLGSCFLRVKDRLVSLEATKRDLEKWGERGNRLRSRITQSSQCLSKNQILNSIFQKTILKATTALKDVGISVDHYKIDMEVICLNSYDLIMDFDVSGVVPTISYQRTEEETFPYVMGDVELLGTTDLERLSSLSLALVNSMKTSSTVKLRQNEFGPARYQVVRCKEAYCQEFSLGNTELQLIYQKTGECSKCYAINDNKVGEVCSFYADPKRYFPAIFSAEVLQTTISTMISWIEDCNELEGQLNNIRSLTKMILVLILAHPSKRSQKLLQNLRYFVMAYLSDYHHKDLIDKIREELITDVEFLLYRLIRTLMNLVLSEDVKSMMTNRFKFILNVSYMCHFITKETPDRLTDQIKCFEKFLEPKVRFGHVSTNPADTATEEELDDMVYNAKKFLSKDGCTTIEGPDYKRPGVSKKYLSLLTSSFNNGSLFKEREVKREIKDPLITSGSAALDLASKKSVVVNKYTDGSRILNYDFNKLTALAVSQLTEVFSRKGKYLLNKQDYEYKVQQAMSNLVLGSGQLKSDADGADLDEILLDGGASDYFDQLKETVEKIVDQYREPVKLGSGPNGDGQPSINDLDEIVSNKFYIRLIKGELSNHMVEEFDHDILPGKFYEEFCNAVYENSRLKQKYFYCGHMSQCPIGELTKAVSTRTYFNHEYFQCFKSILLIMNANTLMGRYTHYKSRNLNFKFDMGKLSDDVRISERESNSEALSKALSLTNCTTAMLKNLCFYSQESPQSYDSVGPDTGRLKFSLSYKEQVGGNRELYIGDLRTKMFTRLIEDYFEAISLQLSGSCLNNEKEFENAILSMKLNVSLAHVSYSMDHSKWGPMMCPFLFLTVLQNLIFLSKDLQADIKGRDYLSTLLMWHMHKMVEIPFNVVTAMMKSFIKAQLGLRKKTKQSITEDFFYSNFQAGVVPSHISSILDMGQGILHNTSDFYALISERFINYAISCICGGTIDAYTSSDDQISLFDQSLTELLQRDPEEFRTLIEFHYYMSDQLNKFVSPKSVIGRFVAEFKSRFFVWGDEVPLLTKFVAAALHNIKCKEPHQLAETIDTIIDQSVANGVPVHLCNLIQKRTLNPLQYARYPIDPFLLNCETDVRDWVDGNRSYRIMRQIEGLIPNACSKIRSMLRKLYNRLKTGQLHEEFTTNYLSSEHLSSLRNLCELLDVEPPSESDLEYSWLNLAAHHPLRMVLRQKIIYSGAVNLDDEKIPTIVKTIQNKLSSTFTRGAQKLLSEAINKSAFQSSIASGFVGLCRTLGSKCVRGPNKENLYIKSIQSLISDVKGIKLLTNSNGIQYWQVPLELRNGSGGESVVSYFRPLLWDYMCISLSTAIELGAWVLGEPKTVKVFDFFKHNPCDYFPLKPTASKLLEDRVGLNHIIHSLRRLYPSVFEKHILPFMSDLASTKMKWSPRIKFLDLCVALDVNCEALSLVSHIVKWKREEHYIVLSSELRLSHSRTHEPMVEERVVSTSDAVDNFMRQIYFESYVRPFVATTRTLGSFTWFPHKTSVPEGEGLHRMGPFSSFVEKVIHKGVERPMFKHDLMMGYAWIDFDIEPARFNQNQLIASGLVDPKFDSLEDFFDAVASLPPGSAKLSQTVRFRVKSQDASFKESFAIHLEYTGSMNQQAKYLVHDVTVMYSGAVSPCVLSDCWRLVLSGPTFKGKSAWYVDTEIINEFLIDTNQLGHVTPVEIVVDMERLQFTEYDFVLVGPCTEPTPLVVHRGGLWECGKKLASFTPVIQDQDLEIFVREVGDTSSDLLIGALSDMMIDRLGLRMQWSGVDIVSTLRAAAPSCEGILSAVLEAVDNWVEFKGYALCYSKSRGKVMVQSSGGKLRLKGRTCEELTRKDECIEDIE</sequence>
<protein>
    <recommendedName>
        <fullName evidence="1">RNA-directed RNA polymerase L</fullName>
        <shortName evidence="1">Protein L</shortName>
        <ecNumber evidence="1">2.7.7.48</ecNumber>
    </recommendedName>
    <alternativeName>
        <fullName evidence="1">Large structural protein</fullName>
    </alternativeName>
    <alternativeName>
        <fullName evidence="1">Replicase</fullName>
    </alternativeName>
    <alternativeName>
        <fullName evidence="1">Transcriptase</fullName>
    </alternativeName>
    <domain>
        <recommendedName>
            <fullName evidence="1">cap-snatching endonuclease</fullName>
            <ecNumber evidence="1">3.1.-.-</ecNumber>
        </recommendedName>
    </domain>
</protein>
<organism>
    <name type="scientific">Lassa virus (strain Mouse/Sierra Leone/Josiah/1976)</name>
    <name type="common">LASV</name>
    <dbReference type="NCBI Taxonomy" id="11622"/>
    <lineage>
        <taxon>Viruses</taxon>
        <taxon>Riboviria</taxon>
        <taxon>Orthornavirae</taxon>
        <taxon>Negarnaviricota</taxon>
        <taxon>Polyploviricotina</taxon>
        <taxon>Ellioviricetes</taxon>
        <taxon>Bunyavirales</taxon>
        <taxon>Arenaviridae</taxon>
        <taxon>Mammarenavirus</taxon>
        <taxon>Mammarenavirus lassaense</taxon>
    </lineage>
</organism>
<comment type="function">
    <text evidence="1">RNA-dependent RNA polymerase, which is responsible for the replication and transcription of the viral RNA genome using antigenomic RNA as an intermediate. During transcription, synthesizes subgenomic RNAs and assures their capping by a cap-snatching mechanism, which involves the endonuclease activity cleaving the host capped pre-mRNAs. These short capped RNAs are then used as primers for viral transcription. The 3'-end of subgenomic mRNAs molecules are heterogeneous and not polyadenylated. The replicase function is to direct synthesis of antigenomic and genomic RNA which are encapsidated and non capped. As a consequence of the use of the same enzyme for both transcription and replication, these mechanisms need to be well coordinated. These processes may be regulated by proteins N and Z in a dose-dependent manner. Z protein inhibits the viral polymerase L und thus the viral transcription and RNA synthesis.</text>
</comment>
<comment type="catalytic activity">
    <reaction evidence="1">
        <text>RNA(n) + a ribonucleoside 5'-triphosphate = RNA(n+1) + diphosphate</text>
        <dbReference type="Rhea" id="RHEA:21248"/>
        <dbReference type="Rhea" id="RHEA-COMP:14527"/>
        <dbReference type="Rhea" id="RHEA-COMP:17342"/>
        <dbReference type="ChEBI" id="CHEBI:33019"/>
        <dbReference type="ChEBI" id="CHEBI:61557"/>
        <dbReference type="ChEBI" id="CHEBI:140395"/>
        <dbReference type="EC" id="2.7.7.48"/>
    </reaction>
</comment>
<comment type="cofactor">
    <cofactor evidence="1">
        <name>Mn(2+)</name>
        <dbReference type="ChEBI" id="CHEBI:29035"/>
    </cofactor>
    <text evidence="1">For endonuclease activity. Binds 2 Mn(2+) ions in the active site. The divalent metal ions are crucial for catalytic activity.</text>
</comment>
<comment type="cofactor">
    <cofactor evidence="1">
        <name>Mg(2+)</name>
        <dbReference type="ChEBI" id="CHEBI:18420"/>
    </cofactor>
    <cofactor evidence="1">
        <name>Mn(2+)</name>
        <dbReference type="ChEBI" id="CHEBI:29035"/>
    </cofactor>
    <text evidence="1">For polymerase activity.</text>
</comment>
<comment type="subunit">
    <text evidence="1">Homomultimer; the oligomeric structure is essential for the polymerase activity. Interacts with nucleoprotein N. Interacts with protein Z; this interaction inhibits viral transcription and replication, Z partially blocks the product exit tunnel for the releasing nascent RNA product.</text>
</comment>
<comment type="subcellular location">
    <subcellularLocation>
        <location evidence="1">Virion</location>
    </subcellularLocation>
    <subcellularLocation>
        <location evidence="1">Host cytoplasm</location>
    </subcellularLocation>
</comment>
<comment type="domain">
    <text evidence="1">The N-terminus contains the endonuclease activity (endoN). The central region contains the RdRp activity.</text>
</comment>
<comment type="miscellaneous">
    <text evidence="1">Classified as His(-) endonuclease since it does not have a histidine upstream of the active site that coordinates the first cation. His(-) endonucleases display very low activity in vitro, although they are clearly active in vivo.</text>
</comment>
<comment type="similarity">
    <text evidence="1">Belongs to the Bunyavirales RNA polymerase family.</text>
</comment>
<name>L_LASSJ</name>
<evidence type="ECO:0000255" key="1">
    <source>
        <dbReference type="HAMAP-Rule" id="MF_04086"/>
    </source>
</evidence>
<feature type="chain" id="PRO_0000361639" description="RNA-directed RNA polymerase L">
    <location>
        <begin position="1"/>
        <end position="2218"/>
    </location>
</feature>
<feature type="domain" description="RdRp catalytic" evidence="1">
    <location>
        <begin position="1174"/>
        <end position="1370"/>
    </location>
</feature>
<feature type="region of interest" description="Endonuclease" evidence="1">
    <location>
        <begin position="26"/>
        <end position="288"/>
    </location>
</feature>
<feature type="active site" evidence="1">
    <location>
        <position position="115"/>
    </location>
</feature>
<feature type="binding site" evidence="1">
    <location>
        <position position="51"/>
    </location>
    <ligand>
        <name>Mn(2+)</name>
        <dbReference type="ChEBI" id="CHEBI:29035"/>
        <label>1</label>
    </ligand>
</feature>
<feature type="binding site" evidence="1">
    <location>
        <position position="89"/>
    </location>
    <ligand>
        <name>Mn(2+)</name>
        <dbReference type="ChEBI" id="CHEBI:29035"/>
        <label>1</label>
    </ligand>
</feature>
<feature type="binding site" evidence="1">
    <location>
        <position position="89"/>
    </location>
    <ligand>
        <name>Mn(2+)</name>
        <dbReference type="ChEBI" id="CHEBI:29035"/>
        <label>2</label>
    </ligand>
</feature>
<feature type="binding site" evidence="1">
    <location>
        <position position="102"/>
    </location>
    <ligand>
        <name>Mn(2+)</name>
        <dbReference type="ChEBI" id="CHEBI:29035"/>
        <label>1</label>
    </ligand>
</feature>
<feature type="binding site" evidence="1">
    <location>
        <position position="1332"/>
    </location>
    <ligand>
        <name>Mg(2+)</name>
        <dbReference type="ChEBI" id="CHEBI:18420"/>
        <note>catalytic; for RdRp activity</note>
    </ligand>
</feature>
<organismHost>
    <name type="scientific">Homo sapiens</name>
    <name type="common">Human</name>
    <dbReference type="NCBI Taxonomy" id="9606"/>
</organismHost>
<organismHost>
    <name type="scientific">Mastomys natalensis</name>
    <name type="common">African soft-furred rat</name>
    <name type="synonym">Praomys natalensis</name>
    <dbReference type="NCBI Taxonomy" id="10112"/>
</organismHost>
<dbReference type="EC" id="2.7.7.48" evidence="1"/>
<dbReference type="EC" id="3.1.-.-" evidence="1"/>
<dbReference type="EMBL" id="U63094">
    <property type="protein sequence ID" value="AAB50401.1"/>
    <property type="molecule type" value="Genomic_RNA"/>
</dbReference>
<dbReference type="EMBL" id="U73034">
    <property type="protein sequence ID" value="AAC05817.1"/>
    <property type="molecule type" value="Genomic_RNA"/>
</dbReference>
<dbReference type="RefSeq" id="NP_694872.1">
    <property type="nucleotide sequence ID" value="NC_004297.1"/>
</dbReference>
<dbReference type="SMR" id="O09705"/>
<dbReference type="KEGG" id="vg:956587"/>
<dbReference type="Proteomes" id="UP000002473">
    <property type="component" value="Genome"/>
</dbReference>
<dbReference type="GO" id="GO:0030430">
    <property type="term" value="C:host cell cytoplasm"/>
    <property type="evidence" value="ECO:0007669"/>
    <property type="project" value="UniProtKB-SubCell"/>
</dbReference>
<dbReference type="GO" id="GO:0044423">
    <property type="term" value="C:virion component"/>
    <property type="evidence" value="ECO:0007669"/>
    <property type="project" value="UniProtKB-KW"/>
</dbReference>
<dbReference type="GO" id="GO:0016787">
    <property type="term" value="F:hydrolase activity"/>
    <property type="evidence" value="ECO:0007669"/>
    <property type="project" value="UniProtKB-KW"/>
</dbReference>
<dbReference type="GO" id="GO:0046872">
    <property type="term" value="F:metal ion binding"/>
    <property type="evidence" value="ECO:0007669"/>
    <property type="project" value="UniProtKB-KW"/>
</dbReference>
<dbReference type="GO" id="GO:0000166">
    <property type="term" value="F:nucleotide binding"/>
    <property type="evidence" value="ECO:0007669"/>
    <property type="project" value="UniProtKB-UniRule"/>
</dbReference>
<dbReference type="GO" id="GO:0003968">
    <property type="term" value="F:RNA-directed RNA polymerase activity"/>
    <property type="evidence" value="ECO:0007669"/>
    <property type="project" value="UniProtKB-UniRule"/>
</dbReference>
<dbReference type="GO" id="GO:0075526">
    <property type="term" value="P:cap snatching"/>
    <property type="evidence" value="ECO:0007669"/>
    <property type="project" value="UniProtKB-UniRule"/>
</dbReference>
<dbReference type="GO" id="GO:0039689">
    <property type="term" value="P:negative stranded viral RNA replication"/>
    <property type="evidence" value="ECO:0000250"/>
    <property type="project" value="UniProtKB"/>
</dbReference>
<dbReference type="GO" id="GO:0039696">
    <property type="term" value="P:RNA-templated viral transcription"/>
    <property type="evidence" value="ECO:0000250"/>
    <property type="project" value="UniProtKB"/>
</dbReference>
<dbReference type="FunFam" id="3.30.70.2640:FF:000001">
    <property type="entry name" value="RNA-directed RNA polymerase L"/>
    <property type="match status" value="1"/>
</dbReference>
<dbReference type="Gene3D" id="3.30.70.2640">
    <property type="entry name" value="Arenavirus RNA polymerase"/>
    <property type="match status" value="1"/>
</dbReference>
<dbReference type="Gene3D" id="1.20.1440.300">
    <property type="entry name" value="RNA-directed RNA polymerase L, helical domain"/>
    <property type="match status" value="1"/>
</dbReference>
<dbReference type="HAMAP" id="MF_04086">
    <property type="entry name" value="ARENA_L"/>
    <property type="match status" value="1"/>
</dbReference>
<dbReference type="InterPro" id="IPR026382">
    <property type="entry name" value="CapSnatch_arenavir"/>
</dbReference>
<dbReference type="InterPro" id="IPR048006">
    <property type="entry name" value="CapSnatch_bunyavir"/>
</dbReference>
<dbReference type="InterPro" id="IPR007099">
    <property type="entry name" value="RNA-dir_pol_NSvirus"/>
</dbReference>
<dbReference type="InterPro" id="IPR010453">
    <property type="entry name" value="RNA_pol_arenavir"/>
</dbReference>
<dbReference type="NCBIfam" id="TIGR04202">
    <property type="entry name" value="capSnatchArena"/>
    <property type="match status" value="1"/>
</dbReference>
<dbReference type="Pfam" id="PF06317">
    <property type="entry name" value="Arena_RNA_pol"/>
    <property type="match status" value="1"/>
</dbReference>
<dbReference type="Pfam" id="PF17296">
    <property type="entry name" value="ArenaCapSnatch"/>
    <property type="match status" value="1"/>
</dbReference>
<dbReference type="PIRSF" id="PIRSF000836">
    <property type="entry name" value="L_ArenaV"/>
    <property type="match status" value="1"/>
</dbReference>
<dbReference type="PROSITE" id="PS50525">
    <property type="entry name" value="RDRP_SSRNA_NEG_SEG"/>
    <property type="match status" value="1"/>
</dbReference>
<keyword id="KW-1157">Cap snatching</keyword>
<keyword id="KW-1035">Host cytoplasm</keyword>
<keyword id="KW-0378">Hydrolase</keyword>
<keyword id="KW-0460">Magnesium</keyword>
<keyword id="KW-0464">Manganese</keyword>
<keyword id="KW-0479">Metal-binding</keyword>
<keyword id="KW-0547">Nucleotide-binding</keyword>
<keyword id="KW-0548">Nucleotidyltransferase</keyword>
<keyword id="KW-1185">Reference proteome</keyword>
<keyword id="KW-0696">RNA-directed RNA polymerase</keyword>
<keyword id="KW-0808">Transferase</keyword>
<keyword id="KW-0693">Viral RNA replication</keyword>
<keyword id="KW-0946">Virion</keyword>
<proteinExistence type="inferred from homology"/>
<gene>
    <name evidence="1" type="primary">L</name>
</gene>